<reference key="1">
    <citation type="submission" date="2005-12" db="EMBL/GenBank/DDBJ databases">
        <authorList>
            <consortium name="NIH - Mammalian Gene Collection (MGC) project"/>
        </authorList>
    </citation>
    <scope>NUCLEOTIDE SEQUENCE [LARGE SCALE MRNA]</scope>
    <source>
        <strain>Crossbred X Angus</strain>
        <tissue>Liver</tissue>
    </source>
</reference>
<reference key="2">
    <citation type="journal article" date="1991" name="FEBS Lett.">
        <title>'Neuron-specific' protein gene product 9.5 (PGP 9.5) is also expressed in glioma cell lines and its expression depends on cellular growth state.</title>
        <authorList>
            <person name="Giambanco I."/>
            <person name="Bianchi R."/>
            <person name="Ceccarelli P."/>
            <person name="Pula G."/>
            <person name="Sorci G."/>
            <person name="Antonioli S."/>
            <person name="Bocchini V."/>
            <person name="Donato R."/>
        </authorList>
    </citation>
    <scope>PROTEIN SEQUENCE OF 1-25</scope>
    <source>
        <tissue>Brain</tissue>
    </source>
</reference>
<name>UCHL1_BOVIN</name>
<keyword id="KW-0007">Acetylation</keyword>
<keyword id="KW-0963">Cytoplasm</keyword>
<keyword id="KW-0903">Direct protein sequencing</keyword>
<keyword id="KW-0256">Endoplasmic reticulum</keyword>
<keyword id="KW-0325">Glycoprotein</keyword>
<keyword id="KW-0378">Hydrolase</keyword>
<keyword id="KW-0449">Lipoprotein</keyword>
<keyword id="KW-0472">Membrane</keyword>
<keyword id="KW-0597">Phosphoprotein</keyword>
<keyword id="KW-0636">Prenylation</keyword>
<keyword id="KW-0645">Protease</keyword>
<keyword id="KW-1185">Reference proteome</keyword>
<keyword id="KW-0788">Thiol protease</keyword>
<keyword id="KW-0833">Ubl conjugation pathway</keyword>
<protein>
    <recommendedName>
        <fullName>Ubiquitin carboxyl-terminal hydrolase isozyme L1</fullName>
        <shortName>UCH-L1</shortName>
        <ecNumber evidence="2">3.4.19.12</ecNumber>
    </recommendedName>
    <alternativeName>
        <fullName>Neuron cytoplasmic protein 9.5</fullName>
    </alternativeName>
    <alternativeName>
        <fullName>PGP 9.5</fullName>
        <shortName>PGP9.5</shortName>
    </alternativeName>
    <alternativeName>
        <fullName>Ubiquitin thioesterase L1</fullName>
    </alternativeName>
</protein>
<feature type="chain" id="PRO_0000211053" description="Ubiquitin carboxyl-terminal hydrolase isozyme L1">
    <location>
        <begin position="1"/>
        <end position="249"/>
    </location>
</feature>
<feature type="propeptide" id="PRO_0000414309" description="Removed in mature form" evidence="1">
    <location>
        <begin position="250"/>
        <end position="252"/>
    </location>
</feature>
<feature type="domain" description="UCH catalytic" evidence="5">
    <location>
        <begin position="2"/>
        <end position="250"/>
    </location>
</feature>
<feature type="region of interest" description="Interaction with ubiquitin" evidence="2">
    <location>
        <begin position="5"/>
        <end position="10"/>
    </location>
</feature>
<feature type="region of interest" description="Interaction with ubiquitin" evidence="2">
    <location>
        <begin position="240"/>
        <end position="245"/>
    </location>
</feature>
<feature type="active site" description="Nucleophile" evidence="5 6">
    <location>
        <position position="119"/>
    </location>
</feature>
<feature type="active site" description="Proton donor" evidence="5">
    <location>
        <position position="190"/>
    </location>
</feature>
<feature type="site" description="Transition state stabilizer" evidence="5">
    <location>
        <position position="113"/>
    </location>
</feature>
<feature type="site" description="Important for enzyme activity" evidence="5">
    <location>
        <position position="205"/>
    </location>
</feature>
<feature type="modified residue" description="N-acetylmethionine" evidence="2">
    <location>
        <position position="1"/>
    </location>
</feature>
<feature type="modified residue" description="Phosphoserine" evidence="3">
    <location>
        <position position="154"/>
    </location>
</feature>
<feature type="lipid moiety-binding region" description="S-farnesyl cysteine" evidence="2">
    <location>
        <position position="249"/>
    </location>
</feature>
<feature type="sequence conflict" description="In Ref. 2; AA sequence." evidence="7" ref="2">
    <original>N</original>
    <variation>D</variation>
    <location>
        <position position="9"/>
    </location>
</feature>
<evidence type="ECO:0000250" key="1"/>
<evidence type="ECO:0000250" key="2">
    <source>
        <dbReference type="UniProtKB" id="P09936"/>
    </source>
</evidence>
<evidence type="ECO:0000250" key="3">
    <source>
        <dbReference type="UniProtKB" id="Q00981"/>
    </source>
</evidence>
<evidence type="ECO:0000250" key="4">
    <source>
        <dbReference type="UniProtKB" id="Q9R0P9"/>
    </source>
</evidence>
<evidence type="ECO:0000255" key="5">
    <source>
        <dbReference type="PROSITE-ProRule" id="PRU01393"/>
    </source>
</evidence>
<evidence type="ECO:0000255" key="6">
    <source>
        <dbReference type="PROSITE-ProRule" id="PRU10091"/>
    </source>
</evidence>
<evidence type="ECO:0000305" key="7"/>
<gene>
    <name type="primary">UCHL1</name>
</gene>
<proteinExistence type="evidence at protein level"/>
<comment type="function">
    <text evidence="2 4">Ubiquitin-protein hydrolase involved both in the processing of ubiquitin precursors and of ubiquitinated proteins. This enzyme is a thiol protease that recognizes and hydrolyzes a peptide bond at the C-terminal glycine of ubiquitin (By similarity). Also binds to free monoubiquitin and may prevent its degradation in lysosomes (By similarity). The homodimer may have ATP-independent ubiquitin ligase activity (By similarity).</text>
</comment>
<comment type="catalytic activity">
    <reaction evidence="2">
        <text>Thiol-dependent hydrolysis of ester, thioester, amide, peptide and isopeptide bonds formed by the C-terminal Gly of ubiquitin (a 76-residue protein attached to proteins as an intracellular targeting signal).</text>
        <dbReference type="EC" id="3.4.19.12"/>
    </reaction>
</comment>
<comment type="subunit">
    <text evidence="1">Monomer. Homodimer. Interacts with COPS5 and SNCA (By similarity).</text>
</comment>
<comment type="subcellular location">
    <subcellularLocation>
        <location>Cytoplasm</location>
    </subcellularLocation>
    <subcellularLocation>
        <location evidence="1">Endoplasmic reticulum membrane</location>
        <topology evidence="1">Lipid-anchor</topology>
    </subcellularLocation>
</comment>
<comment type="tissue specificity">
    <text>Neurons and cells of the diffuse neuroendocrine system and their tumors.</text>
</comment>
<comment type="PTM">
    <text evidence="1">O-glycosylated.</text>
</comment>
<comment type="miscellaneous">
    <text evidence="1">In contrast to UCHL3, does not hydrolyze a peptide bond at the C-terminal glycine of NEDD8.</text>
</comment>
<comment type="similarity">
    <text evidence="7">Belongs to the peptidase C12 family.</text>
</comment>
<comment type="caution">
    <text evidence="2">The homodimer may have ATP-independent ubiquitin ligase activity. However, in another study, UCHL1 was shown to lack ubiquitin ligase activity.</text>
</comment>
<organism>
    <name type="scientific">Bos taurus</name>
    <name type="common">Bovine</name>
    <dbReference type="NCBI Taxonomy" id="9913"/>
    <lineage>
        <taxon>Eukaryota</taxon>
        <taxon>Metazoa</taxon>
        <taxon>Chordata</taxon>
        <taxon>Craniata</taxon>
        <taxon>Vertebrata</taxon>
        <taxon>Euteleostomi</taxon>
        <taxon>Mammalia</taxon>
        <taxon>Eutheria</taxon>
        <taxon>Laurasiatheria</taxon>
        <taxon>Artiodactyla</taxon>
        <taxon>Ruminantia</taxon>
        <taxon>Pecora</taxon>
        <taxon>Bovidae</taxon>
        <taxon>Bovinae</taxon>
        <taxon>Bos</taxon>
    </lineage>
</organism>
<dbReference type="EC" id="3.4.19.12" evidence="2"/>
<dbReference type="EMBL" id="BC111330">
    <property type="protein sequence ID" value="AAI11331.1"/>
    <property type="molecule type" value="mRNA"/>
</dbReference>
<dbReference type="PIR" id="S17561">
    <property type="entry name" value="S17561"/>
</dbReference>
<dbReference type="RefSeq" id="NP_001039637.1">
    <property type="nucleotide sequence ID" value="NM_001046172.2"/>
</dbReference>
<dbReference type="SMR" id="P23356"/>
<dbReference type="FunCoup" id="P23356">
    <property type="interactions" value="1406"/>
</dbReference>
<dbReference type="STRING" id="9913.ENSBTAP00000070222"/>
<dbReference type="MEROPS" id="C12.001"/>
<dbReference type="PaxDb" id="9913-ENSBTAP00000044075"/>
<dbReference type="PeptideAtlas" id="P23356"/>
<dbReference type="GeneID" id="514394"/>
<dbReference type="KEGG" id="bta:514394"/>
<dbReference type="CTD" id="7345"/>
<dbReference type="VEuPathDB" id="HostDB:ENSBTAG00000005078"/>
<dbReference type="eggNOG" id="KOG1415">
    <property type="taxonomic scope" value="Eukaryota"/>
</dbReference>
<dbReference type="HOGENOM" id="CLU_054406_2_0_1"/>
<dbReference type="InParanoid" id="P23356"/>
<dbReference type="OMA" id="CISNGEA"/>
<dbReference type="OrthoDB" id="427186at2759"/>
<dbReference type="TreeFam" id="TF316166"/>
<dbReference type="Reactome" id="R-BTA-5689603">
    <property type="pathway name" value="UCH proteinases"/>
</dbReference>
<dbReference type="Proteomes" id="UP000009136">
    <property type="component" value="Chromosome 6"/>
</dbReference>
<dbReference type="Bgee" id="ENSBTAG00000005078">
    <property type="expression patterns" value="Expressed in Ammon's horn and 105 other cell types or tissues"/>
</dbReference>
<dbReference type="GO" id="GO:0005737">
    <property type="term" value="C:cytoplasm"/>
    <property type="evidence" value="ECO:0000318"/>
    <property type="project" value="GO_Central"/>
</dbReference>
<dbReference type="GO" id="GO:0005789">
    <property type="term" value="C:endoplasmic reticulum membrane"/>
    <property type="evidence" value="ECO:0007669"/>
    <property type="project" value="UniProtKB-SubCell"/>
</dbReference>
<dbReference type="GO" id="GO:0004843">
    <property type="term" value="F:cysteine-type deubiquitinase activity"/>
    <property type="evidence" value="ECO:0000318"/>
    <property type="project" value="GO_Central"/>
</dbReference>
<dbReference type="GO" id="GO:0030163">
    <property type="term" value="P:protein catabolic process"/>
    <property type="evidence" value="ECO:0000318"/>
    <property type="project" value="GO_Central"/>
</dbReference>
<dbReference type="GO" id="GO:0006511">
    <property type="term" value="P:ubiquitin-dependent protein catabolic process"/>
    <property type="evidence" value="ECO:0007669"/>
    <property type="project" value="InterPro"/>
</dbReference>
<dbReference type="CDD" id="cd09616">
    <property type="entry name" value="Peptidase_C12_UCH_L1_L3"/>
    <property type="match status" value="1"/>
</dbReference>
<dbReference type="FunFam" id="3.40.532.10:FF:000004">
    <property type="entry name" value="Ubiquitin carboxyl-terminal hydrolase"/>
    <property type="match status" value="1"/>
</dbReference>
<dbReference type="Gene3D" id="3.40.532.10">
    <property type="entry name" value="Peptidase C12, ubiquitin carboxyl-terminal hydrolase"/>
    <property type="match status" value="1"/>
</dbReference>
<dbReference type="InterPro" id="IPR038765">
    <property type="entry name" value="Papain-like_cys_pep_sf"/>
</dbReference>
<dbReference type="InterPro" id="IPR001578">
    <property type="entry name" value="Peptidase_C12_UCH"/>
</dbReference>
<dbReference type="InterPro" id="IPR036959">
    <property type="entry name" value="Peptidase_C12_UCH_sf"/>
</dbReference>
<dbReference type="InterPro" id="IPR057254">
    <property type="entry name" value="UCH_AS"/>
</dbReference>
<dbReference type="PANTHER" id="PTHR10589">
    <property type="entry name" value="UBIQUITIN CARBOXYL-TERMINAL HYDROLASE"/>
    <property type="match status" value="1"/>
</dbReference>
<dbReference type="PANTHER" id="PTHR10589:SF19">
    <property type="entry name" value="UBIQUITIN CARBOXYL-TERMINAL HYDROLASE ISOZYME L1"/>
    <property type="match status" value="1"/>
</dbReference>
<dbReference type="Pfam" id="PF01088">
    <property type="entry name" value="Peptidase_C12"/>
    <property type="match status" value="1"/>
</dbReference>
<dbReference type="PRINTS" id="PR00707">
    <property type="entry name" value="UBCTHYDRLASE"/>
</dbReference>
<dbReference type="SUPFAM" id="SSF54001">
    <property type="entry name" value="Cysteine proteinases"/>
    <property type="match status" value="1"/>
</dbReference>
<dbReference type="PROSITE" id="PS00140">
    <property type="entry name" value="UCH_1"/>
    <property type="match status" value="1"/>
</dbReference>
<dbReference type="PROSITE" id="PS52048">
    <property type="entry name" value="UCH_DOMAIN"/>
    <property type="match status" value="1"/>
</dbReference>
<accession>P23356</accession>
<accession>Q2NKZ2</accession>
<sequence length="252" mass="28335">MQLKPMEINPEMLNKVLTRLGVAGQWRFEDVLGLEEESLGSVPAPACALLLLFPLTAQRCFKLGREAASRFHHPDYPGRLFILLVSQHENFRKKQIEELKGQEVSPKVYFMKQTIGNSCGTIGLIHAVANNQDKLEFEDGSVLKQFLSETEKLSPEDRAKCFEKNEAIQAAHDAVAQEGQCRVDDKVNFHFILFNNVDGHLYELDGRMPFPVNHGTSSEDSLLQDAAKVCREFTEREQGEVRFSAVALCKAA</sequence>